<gene>
    <name type="primary">MGMT</name>
</gene>
<keyword id="KW-0227">DNA damage</keyword>
<keyword id="KW-0234">DNA repair</keyword>
<keyword id="KW-0238">DNA-binding</keyword>
<keyword id="KW-0479">Metal-binding</keyword>
<keyword id="KW-0489">Methyltransferase</keyword>
<keyword id="KW-0539">Nucleus</keyword>
<keyword id="KW-0597">Phosphoprotein</keyword>
<keyword id="KW-0808">Transferase</keyword>
<keyword id="KW-0862">Zinc</keyword>
<sequence>MAETCKMKYTVFHSPLGKIELCGCERGLHGIRFLSGKTPSSDPKEAPASPELLGGPEDLPESLVQCTTWLEAYFQEPAATEGLPLPALHHPVFQQDSFTRQVLWKLLKVVKFGEMVSYQQLAALAGNPKAARAVGGAMRNNPVPILIPCHRVICSNGSIGNYSGGGQAVKEWLLAHEGIPTRQPACKDLGLTGTRLKPSGGSTSSKLSG</sequence>
<name>MGMT_CRIGR</name>
<evidence type="ECO:0000250" key="1"/>
<evidence type="ECO:0000250" key="2">
    <source>
        <dbReference type="UniProtKB" id="P16455"/>
    </source>
</evidence>
<evidence type="ECO:0000255" key="3">
    <source>
        <dbReference type="PROSITE-ProRule" id="PRU10017"/>
    </source>
</evidence>
<evidence type="ECO:0000256" key="4">
    <source>
        <dbReference type="SAM" id="MobiDB-lite"/>
    </source>
</evidence>
<evidence type="ECO:0000305" key="5"/>
<accession>P26186</accession>
<feature type="chain" id="PRO_0000139358" description="Methylated-DNA--protein-cysteine methyltransferase">
    <location>
        <begin position="1"/>
        <end position="209"/>
    </location>
</feature>
<feature type="region of interest" description="Disordered" evidence="4">
    <location>
        <begin position="35"/>
        <end position="57"/>
    </location>
</feature>
<feature type="active site" description="Nucleophile; methyl group acceptor" evidence="3">
    <location>
        <position position="149"/>
    </location>
</feature>
<feature type="binding site" evidence="1">
    <location>
        <position position="5"/>
    </location>
    <ligand>
        <name>Zn(2+)</name>
        <dbReference type="ChEBI" id="CHEBI:29105"/>
    </ligand>
</feature>
<feature type="binding site" evidence="1">
    <location>
        <position position="24"/>
    </location>
    <ligand>
        <name>Zn(2+)</name>
        <dbReference type="ChEBI" id="CHEBI:29105"/>
    </ligand>
</feature>
<feature type="binding site" evidence="1">
    <location>
        <position position="29"/>
    </location>
    <ligand>
        <name>Zn(2+)</name>
        <dbReference type="ChEBI" id="CHEBI:29105"/>
    </ligand>
</feature>
<feature type="binding site" evidence="1">
    <location>
        <position position="89"/>
    </location>
    <ligand>
        <name>Zn(2+)</name>
        <dbReference type="ChEBI" id="CHEBI:29105"/>
    </ligand>
</feature>
<feature type="binding site" evidence="1">
    <location>
        <position position="99"/>
    </location>
    <ligand>
        <name>DNA</name>
        <dbReference type="ChEBI" id="CHEBI:16991"/>
    </ligand>
</feature>
<feature type="binding site" evidence="1">
    <location>
        <position position="118"/>
    </location>
    <ligand>
        <name>DNA</name>
        <dbReference type="ChEBI" id="CHEBI:16991"/>
    </ligand>
</feature>
<feature type="binding site" evidence="1">
    <location>
        <position position="119"/>
    </location>
    <ligand>
        <name>DNA</name>
        <dbReference type="ChEBI" id="CHEBI:16991"/>
    </ligand>
</feature>
<feature type="binding site" evidence="1">
    <location>
        <position position="127"/>
    </location>
    <ligand>
        <name>DNA</name>
        <dbReference type="ChEBI" id="CHEBI:16991"/>
    </ligand>
</feature>
<feature type="binding site" evidence="1">
    <location>
        <position position="132"/>
    </location>
    <ligand>
        <name>DNA</name>
        <dbReference type="ChEBI" id="CHEBI:16991"/>
    </ligand>
</feature>
<feature type="binding site" evidence="1">
    <location>
        <position position="155"/>
    </location>
    <ligand>
        <name>DNA</name>
        <dbReference type="ChEBI" id="CHEBI:16991"/>
    </ligand>
</feature>
<feature type="modified residue" description="Phosphoserine" evidence="2">
    <location>
        <position position="14"/>
    </location>
</feature>
<feature type="modified residue" description="Phosphoserine" evidence="2">
    <location>
        <position position="205"/>
    </location>
</feature>
<proteinExistence type="evidence at transcript level"/>
<reference key="1">
    <citation type="journal article" date="1992" name="Nucleic Acids Res.">
        <title>Isolation and partial characterisation of a Chinese hamster O6-alkylguanine-DNA alkyltransferase cDNA.</title>
        <authorList>
            <person name="Rafferty J.A."/>
            <person name="Elder R.H."/>
            <person name="Watson A.J."/>
            <person name="Cawkwell L."/>
            <person name="Potter P.M."/>
            <person name="Margison G.P."/>
        </authorList>
    </citation>
    <scope>NUCLEOTIDE SEQUENCE [MRNA]</scope>
    <source>
        <tissue>Lung</tissue>
    </source>
</reference>
<comment type="function">
    <text>Involved in the cellular defense against the biological effects of O6-methylguanine (O6-MeG) and O4-methylthymine (O4-MeT) in DNA. Repairs the methylated nucleobase in DNA by stoichiometrically transferring the methyl group to a cysteine residue in the enzyme. This is a suicide reaction: the enzyme is irreversibly inactivated.</text>
</comment>
<comment type="catalytic activity">
    <reaction evidence="3">
        <text>a 6-O-methyl-2'-deoxyguanosine in DNA + L-cysteinyl-[protein] = S-methyl-L-cysteinyl-[protein] + a 2'-deoxyguanosine in DNA</text>
        <dbReference type="Rhea" id="RHEA:24000"/>
        <dbReference type="Rhea" id="RHEA-COMP:10131"/>
        <dbReference type="Rhea" id="RHEA-COMP:10132"/>
        <dbReference type="Rhea" id="RHEA-COMP:11367"/>
        <dbReference type="Rhea" id="RHEA-COMP:11368"/>
        <dbReference type="ChEBI" id="CHEBI:29950"/>
        <dbReference type="ChEBI" id="CHEBI:82612"/>
        <dbReference type="ChEBI" id="CHEBI:85445"/>
        <dbReference type="ChEBI" id="CHEBI:85448"/>
        <dbReference type="EC" id="2.1.1.63"/>
    </reaction>
</comment>
<comment type="catalytic activity">
    <reaction evidence="3">
        <text>a 4-O-methyl-thymidine in DNA + L-cysteinyl-[protein] = a thymidine in DNA + S-methyl-L-cysteinyl-[protein]</text>
        <dbReference type="Rhea" id="RHEA:53428"/>
        <dbReference type="Rhea" id="RHEA-COMP:10131"/>
        <dbReference type="Rhea" id="RHEA-COMP:10132"/>
        <dbReference type="Rhea" id="RHEA-COMP:13555"/>
        <dbReference type="Rhea" id="RHEA-COMP:13556"/>
        <dbReference type="ChEBI" id="CHEBI:29950"/>
        <dbReference type="ChEBI" id="CHEBI:82612"/>
        <dbReference type="ChEBI" id="CHEBI:137386"/>
        <dbReference type="ChEBI" id="CHEBI:137387"/>
        <dbReference type="EC" id="2.1.1.63"/>
    </reaction>
</comment>
<comment type="cofactor">
    <cofactor evidence="1">
        <name>Zn(2+)</name>
        <dbReference type="ChEBI" id="CHEBI:29105"/>
    </cofactor>
    <text evidence="1">Binds 1 zinc ion.</text>
</comment>
<comment type="subcellular location">
    <subcellularLocation>
        <location evidence="5">Nucleus</location>
    </subcellularLocation>
</comment>
<comment type="miscellaneous">
    <text>This enzyme catalyzes only one turnover and therefore is not strictly catalytic. According to one definition, an enzyme is a biocatalyst that acts repeatedly and over many reaction cycles.</text>
</comment>
<comment type="similarity">
    <text evidence="5">Belongs to the MGMT family.</text>
</comment>
<dbReference type="EC" id="2.1.1.63"/>
<dbReference type="EMBL" id="X65081">
    <property type="protein sequence ID" value="CAA46209.1"/>
    <property type="molecule type" value="mRNA"/>
</dbReference>
<dbReference type="SMR" id="P26186"/>
<dbReference type="PaxDb" id="10029-XP_007608309.1"/>
<dbReference type="eggNOG" id="KOG4062">
    <property type="taxonomic scope" value="Eukaryota"/>
</dbReference>
<dbReference type="Proteomes" id="UP000694386">
    <property type="component" value="Unplaced"/>
</dbReference>
<dbReference type="Proteomes" id="UP001108280">
    <property type="component" value="Unplaced"/>
</dbReference>
<dbReference type="GO" id="GO:0005654">
    <property type="term" value="C:nucleoplasm"/>
    <property type="evidence" value="ECO:0007669"/>
    <property type="project" value="TreeGrafter"/>
</dbReference>
<dbReference type="GO" id="GO:0003677">
    <property type="term" value="F:DNA binding"/>
    <property type="evidence" value="ECO:0007669"/>
    <property type="project" value="UniProtKB-KW"/>
</dbReference>
<dbReference type="GO" id="GO:0046872">
    <property type="term" value="F:metal ion binding"/>
    <property type="evidence" value="ECO:0007669"/>
    <property type="project" value="UniProtKB-KW"/>
</dbReference>
<dbReference type="GO" id="GO:0003908">
    <property type="term" value="F:methylated-DNA-[protein]-cysteine S-methyltransferase activity"/>
    <property type="evidence" value="ECO:0007669"/>
    <property type="project" value="UniProtKB-EC"/>
</dbReference>
<dbReference type="GO" id="GO:0006281">
    <property type="term" value="P:DNA repair"/>
    <property type="evidence" value="ECO:0007669"/>
    <property type="project" value="UniProtKB-KW"/>
</dbReference>
<dbReference type="GO" id="GO:0032259">
    <property type="term" value="P:methylation"/>
    <property type="evidence" value="ECO:0007669"/>
    <property type="project" value="UniProtKB-KW"/>
</dbReference>
<dbReference type="CDD" id="cd06445">
    <property type="entry name" value="ATase"/>
    <property type="match status" value="1"/>
</dbReference>
<dbReference type="FunFam" id="1.10.10.10:FF:000214">
    <property type="entry name" value="Methylated-DNA--protein-cysteine methyltransferase"/>
    <property type="match status" value="1"/>
</dbReference>
<dbReference type="FunFam" id="3.30.160.70:FF:000001">
    <property type="entry name" value="Methylated-DNA--protein-cysteine methyltransferase"/>
    <property type="match status" value="1"/>
</dbReference>
<dbReference type="Gene3D" id="3.30.160.70">
    <property type="entry name" value="Methylated DNA-protein cysteine methyltransferase domain"/>
    <property type="match status" value="1"/>
</dbReference>
<dbReference type="Gene3D" id="1.10.10.10">
    <property type="entry name" value="Winged helix-like DNA-binding domain superfamily/Winged helix DNA-binding domain"/>
    <property type="match status" value="1"/>
</dbReference>
<dbReference type="InterPro" id="IPR001497">
    <property type="entry name" value="MethylDNA_cys_MeTrfase_AS"/>
</dbReference>
<dbReference type="InterPro" id="IPR014048">
    <property type="entry name" value="MethylDNA_cys_MeTrfase_DNA-bd"/>
</dbReference>
<dbReference type="InterPro" id="IPR036217">
    <property type="entry name" value="MethylDNA_cys_MeTrfase_DNAb"/>
</dbReference>
<dbReference type="InterPro" id="IPR008332">
    <property type="entry name" value="MethylG_MeTrfase_N"/>
</dbReference>
<dbReference type="InterPro" id="IPR036631">
    <property type="entry name" value="MGMT_N_sf"/>
</dbReference>
<dbReference type="InterPro" id="IPR036388">
    <property type="entry name" value="WH-like_DNA-bd_sf"/>
</dbReference>
<dbReference type="NCBIfam" id="TIGR00589">
    <property type="entry name" value="ogt"/>
    <property type="match status" value="1"/>
</dbReference>
<dbReference type="PANTHER" id="PTHR46460">
    <property type="entry name" value="METHYLATED-DNA--PROTEIN-CYSTEINE METHYLTRANSFERASE"/>
    <property type="match status" value="1"/>
</dbReference>
<dbReference type="PANTHER" id="PTHR46460:SF1">
    <property type="entry name" value="METHYLATED-DNA--PROTEIN-CYSTEINE METHYLTRANSFERASE"/>
    <property type="match status" value="1"/>
</dbReference>
<dbReference type="Pfam" id="PF01035">
    <property type="entry name" value="DNA_binding_1"/>
    <property type="match status" value="1"/>
</dbReference>
<dbReference type="Pfam" id="PF02870">
    <property type="entry name" value="Methyltransf_1N"/>
    <property type="match status" value="1"/>
</dbReference>
<dbReference type="SUPFAM" id="SSF53155">
    <property type="entry name" value="Methylated DNA-protein cysteine methyltransferase domain"/>
    <property type="match status" value="1"/>
</dbReference>
<dbReference type="SUPFAM" id="SSF46767">
    <property type="entry name" value="Methylated DNA-protein cysteine methyltransferase, C-terminal domain"/>
    <property type="match status" value="1"/>
</dbReference>
<dbReference type="PROSITE" id="PS00374">
    <property type="entry name" value="MGMT"/>
    <property type="match status" value="1"/>
</dbReference>
<protein>
    <recommendedName>
        <fullName>Methylated-DNA--protein-cysteine methyltransferase</fullName>
        <ecNumber>2.1.1.63</ecNumber>
    </recommendedName>
    <alternativeName>
        <fullName>6-O-methylguanine-DNA methyltransferase</fullName>
        <shortName>MGMT</shortName>
    </alternativeName>
    <alternativeName>
        <fullName>O-6-methylguanine-DNA-alkyltransferase</fullName>
    </alternativeName>
</protein>
<organism>
    <name type="scientific">Cricetulus griseus</name>
    <name type="common">Chinese hamster</name>
    <name type="synonym">Cricetulus barabensis griseus</name>
    <dbReference type="NCBI Taxonomy" id="10029"/>
    <lineage>
        <taxon>Eukaryota</taxon>
        <taxon>Metazoa</taxon>
        <taxon>Chordata</taxon>
        <taxon>Craniata</taxon>
        <taxon>Vertebrata</taxon>
        <taxon>Euteleostomi</taxon>
        <taxon>Mammalia</taxon>
        <taxon>Eutheria</taxon>
        <taxon>Euarchontoglires</taxon>
        <taxon>Glires</taxon>
        <taxon>Rodentia</taxon>
        <taxon>Myomorpha</taxon>
        <taxon>Muroidea</taxon>
        <taxon>Cricetidae</taxon>
        <taxon>Cricetinae</taxon>
        <taxon>Cricetulus</taxon>
    </lineage>
</organism>